<keyword id="KW-0249">Electron transport</keyword>
<keyword id="KW-0472">Membrane</keyword>
<keyword id="KW-0496">Mitochondrion</keyword>
<keyword id="KW-0999">Mitochondrion inner membrane</keyword>
<keyword id="KW-0520">NAD</keyword>
<keyword id="KW-0679">Respiratory chain</keyword>
<keyword id="KW-1278">Translocase</keyword>
<keyword id="KW-0812">Transmembrane</keyword>
<keyword id="KW-1133">Transmembrane helix</keyword>
<keyword id="KW-0813">Transport</keyword>
<keyword id="KW-0830">Ubiquinone</keyword>
<evidence type="ECO:0000250" key="1">
    <source>
        <dbReference type="UniProtKB" id="P03901"/>
    </source>
</evidence>
<evidence type="ECO:0000250" key="2">
    <source>
        <dbReference type="UniProtKB" id="P03902"/>
    </source>
</evidence>
<evidence type="ECO:0000255" key="3"/>
<evidence type="ECO:0000305" key="4"/>
<sequence length="98" mass="10780">MAPINLNLILAFSLALLGVLIYRTHLMSTLLCLEGMMLSLFILMTLLISHFHMYSMAMAPLILLVFSACEAGVGLALLVKISTSYGNDYVQNLNLLQC</sequence>
<protein>
    <recommendedName>
        <fullName>NADH-ubiquinone oxidoreductase chain 4L</fullName>
        <ecNumber>7.1.1.2</ecNumber>
    </recommendedName>
    <alternativeName>
        <fullName>NADH dehydrogenase subunit 4L</fullName>
    </alternativeName>
</protein>
<gene>
    <name type="primary">MT-ND4L</name>
    <name type="synonym">MTND4L</name>
    <name type="synonym">NADH4L</name>
    <name type="synonym">ND4L</name>
</gene>
<reference key="1">
    <citation type="journal article" date="2004" name="Gene">
        <title>Marsupial relationships and a timeline for marsupial radiation in South Gondwana.</title>
        <authorList>
            <person name="Nilsson M.A."/>
            <person name="Arnason U."/>
            <person name="Spencer P.B.S."/>
            <person name="Janke A."/>
        </authorList>
    </citation>
    <scope>NUCLEOTIDE SEQUENCE [GENOMIC DNA]</scope>
    <source>
        <tissue>Liver</tissue>
    </source>
</reference>
<organism>
    <name type="scientific">Perameles gunnii</name>
    <name type="common">Eastern barred bandicoot</name>
    <dbReference type="NCBI Taxonomy" id="37737"/>
    <lineage>
        <taxon>Eukaryota</taxon>
        <taxon>Metazoa</taxon>
        <taxon>Chordata</taxon>
        <taxon>Craniata</taxon>
        <taxon>Vertebrata</taxon>
        <taxon>Euteleostomi</taxon>
        <taxon>Mammalia</taxon>
        <taxon>Metatheria</taxon>
        <taxon>Peramelemorphia</taxon>
        <taxon>Peramelidae</taxon>
        <taxon>Perameles</taxon>
    </lineage>
</organism>
<name>NU4LM_PERGU</name>
<feature type="chain" id="PRO_0000275086" description="NADH-ubiquinone oxidoreductase chain 4L">
    <location>
        <begin position="1"/>
        <end position="98"/>
    </location>
</feature>
<feature type="transmembrane region" description="Helical" evidence="3">
    <location>
        <begin position="1"/>
        <end position="21"/>
    </location>
</feature>
<feature type="transmembrane region" description="Helical" evidence="3">
    <location>
        <begin position="28"/>
        <end position="48"/>
    </location>
</feature>
<feature type="transmembrane region" description="Helical" evidence="3">
    <location>
        <begin position="59"/>
        <end position="79"/>
    </location>
</feature>
<geneLocation type="mitochondrion"/>
<proteinExistence type="inferred from homology"/>
<accession>Q5QS19</accession>
<dbReference type="EC" id="7.1.1.2"/>
<dbReference type="EMBL" id="AJ639872">
    <property type="protein sequence ID" value="CAG26428.1"/>
    <property type="molecule type" value="Genomic_DNA"/>
</dbReference>
<dbReference type="RefSeq" id="YP_161242.1">
    <property type="nucleotide sequence ID" value="NC_006521.1"/>
</dbReference>
<dbReference type="SMR" id="Q5QS19"/>
<dbReference type="GO" id="GO:0005743">
    <property type="term" value="C:mitochondrial inner membrane"/>
    <property type="evidence" value="ECO:0000250"/>
    <property type="project" value="UniProtKB"/>
</dbReference>
<dbReference type="GO" id="GO:0045271">
    <property type="term" value="C:respiratory chain complex I"/>
    <property type="evidence" value="ECO:0000250"/>
    <property type="project" value="UniProtKB"/>
</dbReference>
<dbReference type="GO" id="GO:0008137">
    <property type="term" value="F:NADH dehydrogenase (ubiquinone) activity"/>
    <property type="evidence" value="ECO:0000250"/>
    <property type="project" value="UniProtKB"/>
</dbReference>
<dbReference type="GO" id="GO:0042773">
    <property type="term" value="P:ATP synthesis coupled electron transport"/>
    <property type="evidence" value="ECO:0007669"/>
    <property type="project" value="InterPro"/>
</dbReference>
<dbReference type="FunFam" id="1.10.287.3510:FF:000002">
    <property type="entry name" value="NADH-ubiquinone oxidoreductase chain 4L"/>
    <property type="match status" value="1"/>
</dbReference>
<dbReference type="Gene3D" id="1.10.287.3510">
    <property type="match status" value="1"/>
</dbReference>
<dbReference type="InterPro" id="IPR001133">
    <property type="entry name" value="NADH_UbQ_OxRdtase_chain4L/K"/>
</dbReference>
<dbReference type="InterPro" id="IPR039428">
    <property type="entry name" value="NUOK/Mnh_C1-like"/>
</dbReference>
<dbReference type="PANTHER" id="PTHR11434:SF0">
    <property type="entry name" value="NADH-UBIQUINONE OXIDOREDUCTASE CHAIN 4L"/>
    <property type="match status" value="1"/>
</dbReference>
<dbReference type="PANTHER" id="PTHR11434">
    <property type="entry name" value="NADH-UBIQUINONE OXIDOREDUCTASE SUBUNIT ND4L"/>
    <property type="match status" value="1"/>
</dbReference>
<dbReference type="Pfam" id="PF00420">
    <property type="entry name" value="Oxidored_q2"/>
    <property type="match status" value="1"/>
</dbReference>
<comment type="function">
    <text evidence="1">Core subunit of the mitochondrial membrane respiratory chain NADH dehydrogenase (Complex I) which catalyzes electron transfer from NADH through the respiratory chain, using ubiquinone as an electron acceptor. Part of the enzyme membrane arm which is embedded in the lipid bilayer and involved in proton translocation.</text>
</comment>
<comment type="catalytic activity">
    <reaction evidence="1">
        <text>a ubiquinone + NADH + 5 H(+)(in) = a ubiquinol + NAD(+) + 4 H(+)(out)</text>
        <dbReference type="Rhea" id="RHEA:29091"/>
        <dbReference type="Rhea" id="RHEA-COMP:9565"/>
        <dbReference type="Rhea" id="RHEA-COMP:9566"/>
        <dbReference type="ChEBI" id="CHEBI:15378"/>
        <dbReference type="ChEBI" id="CHEBI:16389"/>
        <dbReference type="ChEBI" id="CHEBI:17976"/>
        <dbReference type="ChEBI" id="CHEBI:57540"/>
        <dbReference type="ChEBI" id="CHEBI:57945"/>
        <dbReference type="EC" id="7.1.1.2"/>
    </reaction>
    <physiologicalReaction direction="left-to-right" evidence="1">
        <dbReference type="Rhea" id="RHEA:29092"/>
    </physiologicalReaction>
</comment>
<comment type="subunit">
    <text evidence="2">Core subunit of respiratory chain NADH dehydrogenase (Complex I) which is composed of 45 different subunits.</text>
</comment>
<comment type="subcellular location">
    <subcellularLocation>
        <location evidence="2">Mitochondrion inner membrane</location>
        <topology evidence="3">Multi-pass membrane protein</topology>
    </subcellularLocation>
</comment>
<comment type="similarity">
    <text evidence="4">Belongs to the complex I subunit 4L family.</text>
</comment>